<organism>
    <name type="scientific">Persephonella marina (strain DSM 14350 / EX-H1)</name>
    <dbReference type="NCBI Taxonomy" id="123214"/>
    <lineage>
        <taxon>Bacteria</taxon>
        <taxon>Pseudomonadati</taxon>
        <taxon>Aquificota</taxon>
        <taxon>Aquificia</taxon>
        <taxon>Aquificales</taxon>
        <taxon>Hydrogenothermaceae</taxon>
        <taxon>Persephonella</taxon>
    </lineage>
</organism>
<accession>C0QTG6</accession>
<sequence>MAKLSPRDIKRKIQGIKNTQRITKAMKAVSAAKLNKAKAKLNATRPYSERLYDLINDLAMFVDRDIHPLLKIRDEHKVDIVVVTADRGLAGAFNSYVIKTTLGKVKELQEAGKDVNLILIGRKAVQFFKNKGFNIIAEYEDIYRDHMNLSFTSQVGGIIAERYENEKTDAVYLINNELITTATYETKVRKLFPIEPELDYTKLSEISRYNIEPSSEEVLEQLLKRYINFQLYRALVESSTAEHAARMIAMDNATRNAGEAIKRWTIIFNKARQEAITTELIDIINASNAIE</sequence>
<evidence type="ECO:0000255" key="1">
    <source>
        <dbReference type="HAMAP-Rule" id="MF_00815"/>
    </source>
</evidence>
<protein>
    <recommendedName>
        <fullName evidence="1">ATP synthase gamma chain</fullName>
    </recommendedName>
    <alternativeName>
        <fullName evidence="1">ATP synthase F1 sector gamma subunit</fullName>
    </alternativeName>
    <alternativeName>
        <fullName evidence="1">F-ATPase gamma subunit</fullName>
    </alternativeName>
</protein>
<name>ATPG_PERMH</name>
<reference key="1">
    <citation type="journal article" date="2009" name="J. Bacteriol.">
        <title>Complete and draft genome sequences of six members of the Aquificales.</title>
        <authorList>
            <person name="Reysenbach A.-L."/>
            <person name="Hamamura N."/>
            <person name="Podar M."/>
            <person name="Griffiths E."/>
            <person name="Ferreira S."/>
            <person name="Hochstein R."/>
            <person name="Heidelberg J."/>
            <person name="Johnson J."/>
            <person name="Mead D."/>
            <person name="Pohorille A."/>
            <person name="Sarmiento M."/>
            <person name="Schweighofer K."/>
            <person name="Seshadri R."/>
            <person name="Voytek M.A."/>
        </authorList>
    </citation>
    <scope>NUCLEOTIDE SEQUENCE [LARGE SCALE GENOMIC DNA]</scope>
    <source>
        <strain>DSM 14350 / EX-H1</strain>
    </source>
</reference>
<gene>
    <name evidence="1" type="primary">atpG</name>
    <name type="ordered locus">PERMA_0183</name>
</gene>
<comment type="function">
    <text evidence="1">Produces ATP from ADP in the presence of a proton gradient across the membrane. The gamma chain is believed to be important in regulating ATPase activity and the flow of protons through the CF(0) complex.</text>
</comment>
<comment type="subunit">
    <text evidence="1">F-type ATPases have 2 components, CF(1) - the catalytic core - and CF(0) - the membrane proton channel. CF(1) has five subunits: alpha(3), beta(3), gamma(1), delta(1), epsilon(1). CF(0) has three main subunits: a, b and c.</text>
</comment>
<comment type="subcellular location">
    <subcellularLocation>
        <location evidence="1">Cell inner membrane</location>
        <topology evidence="1">Peripheral membrane protein</topology>
    </subcellularLocation>
</comment>
<comment type="similarity">
    <text evidence="1">Belongs to the ATPase gamma chain family.</text>
</comment>
<dbReference type="EMBL" id="CP001230">
    <property type="protein sequence ID" value="ACO03052.1"/>
    <property type="molecule type" value="Genomic_DNA"/>
</dbReference>
<dbReference type="RefSeq" id="WP_012675291.1">
    <property type="nucleotide sequence ID" value="NC_012440.1"/>
</dbReference>
<dbReference type="SMR" id="C0QTG6"/>
<dbReference type="STRING" id="123214.PERMA_0183"/>
<dbReference type="PaxDb" id="123214-PERMA_0183"/>
<dbReference type="KEGG" id="pmx:PERMA_0183"/>
<dbReference type="eggNOG" id="COG0224">
    <property type="taxonomic scope" value="Bacteria"/>
</dbReference>
<dbReference type="HOGENOM" id="CLU_050669_0_1_0"/>
<dbReference type="OrthoDB" id="9812769at2"/>
<dbReference type="Proteomes" id="UP000001366">
    <property type="component" value="Chromosome"/>
</dbReference>
<dbReference type="GO" id="GO:0005886">
    <property type="term" value="C:plasma membrane"/>
    <property type="evidence" value="ECO:0007669"/>
    <property type="project" value="UniProtKB-SubCell"/>
</dbReference>
<dbReference type="GO" id="GO:0045259">
    <property type="term" value="C:proton-transporting ATP synthase complex"/>
    <property type="evidence" value="ECO:0007669"/>
    <property type="project" value="UniProtKB-KW"/>
</dbReference>
<dbReference type="GO" id="GO:0005524">
    <property type="term" value="F:ATP binding"/>
    <property type="evidence" value="ECO:0007669"/>
    <property type="project" value="UniProtKB-UniRule"/>
</dbReference>
<dbReference type="GO" id="GO:0046933">
    <property type="term" value="F:proton-transporting ATP synthase activity, rotational mechanism"/>
    <property type="evidence" value="ECO:0007669"/>
    <property type="project" value="UniProtKB-UniRule"/>
</dbReference>
<dbReference type="GO" id="GO:0042777">
    <property type="term" value="P:proton motive force-driven plasma membrane ATP synthesis"/>
    <property type="evidence" value="ECO:0007669"/>
    <property type="project" value="UniProtKB-UniRule"/>
</dbReference>
<dbReference type="CDD" id="cd12151">
    <property type="entry name" value="F1-ATPase_gamma"/>
    <property type="match status" value="1"/>
</dbReference>
<dbReference type="Gene3D" id="3.40.1380.10">
    <property type="match status" value="1"/>
</dbReference>
<dbReference type="Gene3D" id="1.10.287.80">
    <property type="entry name" value="ATP synthase, gamma subunit, helix hairpin domain"/>
    <property type="match status" value="1"/>
</dbReference>
<dbReference type="HAMAP" id="MF_00815">
    <property type="entry name" value="ATP_synth_gamma_bact"/>
    <property type="match status" value="1"/>
</dbReference>
<dbReference type="InterPro" id="IPR035968">
    <property type="entry name" value="ATP_synth_F1_ATPase_gsu"/>
</dbReference>
<dbReference type="InterPro" id="IPR000131">
    <property type="entry name" value="ATP_synth_F1_gsu"/>
</dbReference>
<dbReference type="NCBIfam" id="TIGR01146">
    <property type="entry name" value="ATPsyn_F1gamma"/>
    <property type="match status" value="1"/>
</dbReference>
<dbReference type="NCBIfam" id="NF010708">
    <property type="entry name" value="PRK14110.1"/>
    <property type="match status" value="1"/>
</dbReference>
<dbReference type="PANTHER" id="PTHR11693">
    <property type="entry name" value="ATP SYNTHASE GAMMA CHAIN"/>
    <property type="match status" value="1"/>
</dbReference>
<dbReference type="PANTHER" id="PTHR11693:SF22">
    <property type="entry name" value="ATP SYNTHASE SUBUNIT GAMMA, MITOCHONDRIAL"/>
    <property type="match status" value="1"/>
</dbReference>
<dbReference type="Pfam" id="PF00231">
    <property type="entry name" value="ATP-synt"/>
    <property type="match status" value="1"/>
</dbReference>
<dbReference type="PRINTS" id="PR00126">
    <property type="entry name" value="ATPASEGAMMA"/>
</dbReference>
<dbReference type="SUPFAM" id="SSF52943">
    <property type="entry name" value="ATP synthase (F1-ATPase), gamma subunit"/>
    <property type="match status" value="1"/>
</dbReference>
<keyword id="KW-0066">ATP synthesis</keyword>
<keyword id="KW-0997">Cell inner membrane</keyword>
<keyword id="KW-1003">Cell membrane</keyword>
<keyword id="KW-0139">CF(1)</keyword>
<keyword id="KW-0375">Hydrogen ion transport</keyword>
<keyword id="KW-0406">Ion transport</keyword>
<keyword id="KW-0472">Membrane</keyword>
<keyword id="KW-1185">Reference proteome</keyword>
<keyword id="KW-0813">Transport</keyword>
<feature type="chain" id="PRO_1000148631" description="ATP synthase gamma chain">
    <location>
        <begin position="1"/>
        <end position="291"/>
    </location>
</feature>
<proteinExistence type="inferred from homology"/>